<accession>A3N1Z1</accession>
<sequence>MPTLFALKERIAQVVQEKNDPIVTAVATTLAEQQYNACFSAEQVKLWKRQFKCSSVELALACLPIAACYALVPISNFYVGAVAIGESGRFYFGANQEFNAQAIQQTVHAEQSAISHAWLAGETAITDMVVNYTPCGHCRQFMNELNSAKTLKIHLPHSQNNLLRQYLPDSFGPKDLNIEKVLFDQQTHSLPLRGDLLTQAAIQTAAQSYAPYSKSLSGIALQVGEQIICGRYAENAAFNPSFLPLQSALNYRRLSGKSDERISRIVMAESKGTTSHRQMSEALAESFLGLNLEYIEV</sequence>
<proteinExistence type="inferred from homology"/>
<feature type="chain" id="PRO_0000318622" description="Cytidine deaminase">
    <location>
        <begin position="1"/>
        <end position="297"/>
    </location>
</feature>
<feature type="domain" description="CMP/dCMP-type deaminase 1" evidence="2">
    <location>
        <begin position="54"/>
        <end position="174"/>
    </location>
</feature>
<feature type="domain" description="CMP/dCMP-type deaminase 2" evidence="2">
    <location>
        <begin position="192"/>
        <end position="297"/>
    </location>
</feature>
<feature type="active site" description="Proton donor" evidence="1">
    <location>
        <position position="110"/>
    </location>
</feature>
<feature type="binding site" evidence="1">
    <location>
        <begin position="95"/>
        <end position="97"/>
    </location>
    <ligand>
        <name>substrate</name>
    </ligand>
</feature>
<feature type="binding site" evidence="1">
    <location>
        <position position="108"/>
    </location>
    <ligand>
        <name>Zn(2+)</name>
        <dbReference type="ChEBI" id="CHEBI:29105"/>
        <note>catalytic</note>
    </ligand>
</feature>
<feature type="binding site" evidence="1">
    <location>
        <position position="135"/>
    </location>
    <ligand>
        <name>Zn(2+)</name>
        <dbReference type="ChEBI" id="CHEBI:29105"/>
        <note>catalytic</note>
    </ligand>
</feature>
<feature type="binding site" evidence="1">
    <location>
        <position position="138"/>
    </location>
    <ligand>
        <name>Zn(2+)</name>
        <dbReference type="ChEBI" id="CHEBI:29105"/>
        <note>catalytic</note>
    </ligand>
</feature>
<evidence type="ECO:0000255" key="1">
    <source>
        <dbReference type="HAMAP-Rule" id="MF_01558"/>
    </source>
</evidence>
<evidence type="ECO:0000255" key="2">
    <source>
        <dbReference type="PROSITE-ProRule" id="PRU01083"/>
    </source>
</evidence>
<organism>
    <name type="scientific">Actinobacillus pleuropneumoniae serotype 5b (strain L20)</name>
    <dbReference type="NCBI Taxonomy" id="416269"/>
    <lineage>
        <taxon>Bacteria</taxon>
        <taxon>Pseudomonadati</taxon>
        <taxon>Pseudomonadota</taxon>
        <taxon>Gammaproteobacteria</taxon>
        <taxon>Pasteurellales</taxon>
        <taxon>Pasteurellaceae</taxon>
        <taxon>Actinobacillus</taxon>
    </lineage>
</organism>
<name>CDD_ACTP2</name>
<protein>
    <recommendedName>
        <fullName evidence="1">Cytidine deaminase</fullName>
        <ecNumber evidence="1">3.5.4.5</ecNumber>
    </recommendedName>
    <alternativeName>
        <fullName evidence="1">Cytidine aminohydrolase</fullName>
        <shortName evidence="1">CDA</shortName>
    </alternativeName>
</protein>
<comment type="function">
    <text evidence="1">This enzyme scavenges exogenous and endogenous cytidine and 2'-deoxycytidine for UMP synthesis.</text>
</comment>
<comment type="catalytic activity">
    <reaction evidence="1">
        <text>cytidine + H2O + H(+) = uridine + NH4(+)</text>
        <dbReference type="Rhea" id="RHEA:16069"/>
        <dbReference type="ChEBI" id="CHEBI:15377"/>
        <dbReference type="ChEBI" id="CHEBI:15378"/>
        <dbReference type="ChEBI" id="CHEBI:16704"/>
        <dbReference type="ChEBI" id="CHEBI:17562"/>
        <dbReference type="ChEBI" id="CHEBI:28938"/>
        <dbReference type="EC" id="3.5.4.5"/>
    </reaction>
</comment>
<comment type="catalytic activity">
    <reaction evidence="1">
        <text>2'-deoxycytidine + H2O + H(+) = 2'-deoxyuridine + NH4(+)</text>
        <dbReference type="Rhea" id="RHEA:13433"/>
        <dbReference type="ChEBI" id="CHEBI:15377"/>
        <dbReference type="ChEBI" id="CHEBI:15378"/>
        <dbReference type="ChEBI" id="CHEBI:15698"/>
        <dbReference type="ChEBI" id="CHEBI:16450"/>
        <dbReference type="ChEBI" id="CHEBI:28938"/>
        <dbReference type="EC" id="3.5.4.5"/>
    </reaction>
</comment>
<comment type="cofactor">
    <cofactor evidence="1">
        <name>Zn(2+)</name>
        <dbReference type="ChEBI" id="CHEBI:29105"/>
    </cofactor>
    <text evidence="1">Binds 1 zinc ion.</text>
</comment>
<comment type="subunit">
    <text evidence="1">Homodimer.</text>
</comment>
<comment type="similarity">
    <text evidence="1">Belongs to the cytidine and deoxycytidylate deaminase family.</text>
</comment>
<keyword id="KW-0378">Hydrolase</keyword>
<keyword id="KW-0479">Metal-binding</keyword>
<keyword id="KW-1185">Reference proteome</keyword>
<keyword id="KW-0862">Zinc</keyword>
<reference key="1">
    <citation type="journal article" date="2008" name="J. Bacteriol.">
        <title>The complete genome sequence of Actinobacillus pleuropneumoniae L20 (serotype 5b).</title>
        <authorList>
            <person name="Foote S.J."/>
            <person name="Bosse J.T."/>
            <person name="Bouevitch A.B."/>
            <person name="Langford P.R."/>
            <person name="Young N.M."/>
            <person name="Nash J.H.E."/>
        </authorList>
    </citation>
    <scope>NUCLEOTIDE SEQUENCE [LARGE SCALE GENOMIC DNA]</scope>
    <source>
        <strain>L20</strain>
    </source>
</reference>
<gene>
    <name evidence="1" type="primary">cdd</name>
    <name type="ordered locus">APL_1343</name>
</gene>
<dbReference type="EC" id="3.5.4.5" evidence="1"/>
<dbReference type="EMBL" id="CP000569">
    <property type="protein sequence ID" value="ABN74427.1"/>
    <property type="molecule type" value="Genomic_DNA"/>
</dbReference>
<dbReference type="RefSeq" id="WP_005598450.1">
    <property type="nucleotide sequence ID" value="NC_009053.1"/>
</dbReference>
<dbReference type="SMR" id="A3N1Z1"/>
<dbReference type="STRING" id="416269.APL_1343"/>
<dbReference type="EnsemblBacteria" id="ABN74427">
    <property type="protein sequence ID" value="ABN74427"/>
    <property type="gene ID" value="APL_1343"/>
</dbReference>
<dbReference type="GeneID" id="48599594"/>
<dbReference type="KEGG" id="apl:APL_1343"/>
<dbReference type="eggNOG" id="COG0295">
    <property type="taxonomic scope" value="Bacteria"/>
</dbReference>
<dbReference type="HOGENOM" id="CLU_052424_0_0_6"/>
<dbReference type="Proteomes" id="UP000001432">
    <property type="component" value="Chromosome"/>
</dbReference>
<dbReference type="GO" id="GO:0005829">
    <property type="term" value="C:cytosol"/>
    <property type="evidence" value="ECO:0007669"/>
    <property type="project" value="TreeGrafter"/>
</dbReference>
<dbReference type="GO" id="GO:0004126">
    <property type="term" value="F:cytidine deaminase activity"/>
    <property type="evidence" value="ECO:0007669"/>
    <property type="project" value="UniProtKB-UniRule"/>
</dbReference>
<dbReference type="GO" id="GO:0042802">
    <property type="term" value="F:identical protein binding"/>
    <property type="evidence" value="ECO:0007669"/>
    <property type="project" value="UniProtKB-ARBA"/>
</dbReference>
<dbReference type="GO" id="GO:0008270">
    <property type="term" value="F:zinc ion binding"/>
    <property type="evidence" value="ECO:0007669"/>
    <property type="project" value="UniProtKB-UniRule"/>
</dbReference>
<dbReference type="GO" id="GO:0009972">
    <property type="term" value="P:cytidine deamination"/>
    <property type="evidence" value="ECO:0007669"/>
    <property type="project" value="InterPro"/>
</dbReference>
<dbReference type="CDD" id="cd01283">
    <property type="entry name" value="cytidine_deaminase"/>
    <property type="match status" value="1"/>
</dbReference>
<dbReference type="FunFam" id="3.40.140.10:FF:000007">
    <property type="entry name" value="Cytidine deaminase"/>
    <property type="match status" value="1"/>
</dbReference>
<dbReference type="Gene3D" id="3.40.140.10">
    <property type="entry name" value="Cytidine Deaminase, domain 2"/>
    <property type="match status" value="2"/>
</dbReference>
<dbReference type="HAMAP" id="MF_01558">
    <property type="entry name" value="Cyt_deam"/>
    <property type="match status" value="1"/>
</dbReference>
<dbReference type="InterPro" id="IPR016192">
    <property type="entry name" value="APOBEC/CMP_deaminase_Zn-bd"/>
</dbReference>
<dbReference type="InterPro" id="IPR002125">
    <property type="entry name" value="CMP_dCMP_dom"/>
</dbReference>
<dbReference type="InterPro" id="IPR013171">
    <property type="entry name" value="Cyd/dCyd_deaminase_Zn-bd"/>
</dbReference>
<dbReference type="InterPro" id="IPR050202">
    <property type="entry name" value="Cyt/Deoxycyt_deaminase"/>
</dbReference>
<dbReference type="InterPro" id="IPR016193">
    <property type="entry name" value="Cytidine_deaminase-like"/>
</dbReference>
<dbReference type="InterPro" id="IPR020797">
    <property type="entry name" value="Cytidine_deaminase_bacteria"/>
</dbReference>
<dbReference type="NCBIfam" id="NF006537">
    <property type="entry name" value="PRK09027.1"/>
    <property type="match status" value="1"/>
</dbReference>
<dbReference type="PANTHER" id="PTHR11644">
    <property type="entry name" value="CYTIDINE DEAMINASE"/>
    <property type="match status" value="1"/>
</dbReference>
<dbReference type="PANTHER" id="PTHR11644:SF2">
    <property type="entry name" value="CYTIDINE DEAMINASE"/>
    <property type="match status" value="1"/>
</dbReference>
<dbReference type="Pfam" id="PF00383">
    <property type="entry name" value="dCMP_cyt_deam_1"/>
    <property type="match status" value="1"/>
</dbReference>
<dbReference type="Pfam" id="PF08211">
    <property type="entry name" value="dCMP_cyt_deam_2"/>
    <property type="match status" value="1"/>
</dbReference>
<dbReference type="PIRSF" id="PIRSF006334">
    <property type="entry name" value="Cdd_plus_pseudo"/>
    <property type="match status" value="1"/>
</dbReference>
<dbReference type="SUPFAM" id="SSF53927">
    <property type="entry name" value="Cytidine deaminase-like"/>
    <property type="match status" value="2"/>
</dbReference>
<dbReference type="PROSITE" id="PS00903">
    <property type="entry name" value="CYT_DCMP_DEAMINASES_1"/>
    <property type="match status" value="1"/>
</dbReference>
<dbReference type="PROSITE" id="PS51747">
    <property type="entry name" value="CYT_DCMP_DEAMINASES_2"/>
    <property type="match status" value="2"/>
</dbReference>